<evidence type="ECO:0000250" key="1">
    <source>
        <dbReference type="UniProtKB" id="Q6M0N7"/>
    </source>
</evidence>
<evidence type="ECO:0000269" key="2">
    <source>
    </source>
</evidence>
<evidence type="ECO:0000269" key="3">
    <source>
    </source>
</evidence>
<evidence type="ECO:0000303" key="4">
    <source>
    </source>
</evidence>
<evidence type="ECO:0000305" key="5"/>
<evidence type="ECO:0000305" key="6">
    <source>
    </source>
</evidence>
<evidence type="ECO:0000305" key="7">
    <source>
    </source>
</evidence>
<feature type="propeptide" id="PRO_0000462044" evidence="6 7">
    <location>
        <begin position="1"/>
        <end position="13"/>
    </location>
</feature>
<feature type="chain" id="PRO_0000218272" description="Minor structural pilin EpdD">
    <location>
        <begin position="14"/>
        <end position="67"/>
    </location>
</feature>
<feature type="short sequence motif" description="QXSXEXXXL" evidence="6">
    <location>
        <begin position="14"/>
        <end position="22"/>
    </location>
</feature>
<proteinExistence type="evidence at protein level"/>
<gene>
    <name evidence="4" type="primary">epdD</name>
    <name type="ordered locus">MMP1283</name>
</gene>
<comment type="function">
    <text evidence="2">Minor component of the type IV-like pili (PubMed:24386316). Essential for pili formation (PubMed:24386316).</text>
</comment>
<comment type="subcellular location">
    <subcellularLocation>
        <location evidence="6">Secreted</location>
    </subcellularLocation>
    <subcellularLocation>
        <location evidence="6">Cell surface</location>
    </subcellularLocation>
    <subcellularLocation>
        <location evidence="6">Fimbrium</location>
    </subcellularLocation>
</comment>
<comment type="induction">
    <text evidence="2">Expressed under standard laboratory conditions at 35 degrees Celsius.</text>
</comment>
<comment type="domain">
    <text evidence="1">Contains an amino terminal motif QXSXEXXXL, which is part of a class III signal sequence.</text>
</comment>
<comment type="PTM">
    <text evidence="3">The N-terminus is cleaved by the prepilin peptidase EppA, which recognizes the class III signal sequence.</text>
</comment>
<comment type="PTM">
    <text evidence="3">N-glycosylated (PubMed:25569238). Glycosylation is AglB-dependent (PubMed:25569238). The N-glycosylation does not occur unless the signal peptide has been cleaved first (PubMed:25569238).</text>
</comment>
<comment type="disruption phenotype">
    <text evidence="2">Deletion of the gene leads to completely nonpiliated cells.</text>
</comment>
<organism>
    <name type="scientific">Methanococcus maripaludis (strain DSM 14266 / JCM 13030 / NBRC 101832 / S2 / LL)</name>
    <dbReference type="NCBI Taxonomy" id="267377"/>
    <lineage>
        <taxon>Archaea</taxon>
        <taxon>Methanobacteriati</taxon>
        <taxon>Methanobacteriota</taxon>
        <taxon>Methanomada group</taxon>
        <taxon>Methanococci</taxon>
        <taxon>Methanococcales</taxon>
        <taxon>Methanococcaceae</taxon>
        <taxon>Methanococcus</taxon>
    </lineage>
</organism>
<protein>
    <recommendedName>
        <fullName evidence="5">Minor structural pilin EpdD</fullName>
    </recommendedName>
</protein>
<name>EPDD_METMP</name>
<dbReference type="EMBL" id="BX950229">
    <property type="protein sequence ID" value="CAF30839.1"/>
    <property type="molecule type" value="Genomic_DNA"/>
</dbReference>
<dbReference type="RefSeq" id="WP_011171227.1">
    <property type="nucleotide sequence ID" value="NC_005791.1"/>
</dbReference>
<dbReference type="SMR" id="Q6LXR6"/>
<dbReference type="STRING" id="267377.MMP1283"/>
<dbReference type="EnsemblBacteria" id="CAF30839">
    <property type="protein sequence ID" value="CAF30839"/>
    <property type="gene ID" value="MMP1283"/>
</dbReference>
<dbReference type="KEGG" id="mmp:MMP1283"/>
<dbReference type="PATRIC" id="fig|267377.15.peg.1316"/>
<dbReference type="eggNOG" id="arCOG05082">
    <property type="taxonomic scope" value="Archaea"/>
</dbReference>
<dbReference type="HOGENOM" id="CLU_197251_2_0_2"/>
<dbReference type="OrthoDB" id="60640at2157"/>
<dbReference type="Proteomes" id="UP000000590">
    <property type="component" value="Chromosome"/>
</dbReference>
<dbReference type="GO" id="GO:0009986">
    <property type="term" value="C:cell surface"/>
    <property type="evidence" value="ECO:0007669"/>
    <property type="project" value="UniProtKB-SubCell"/>
</dbReference>
<dbReference type="GO" id="GO:0005576">
    <property type="term" value="C:extracellular region"/>
    <property type="evidence" value="ECO:0007669"/>
    <property type="project" value="UniProtKB-SubCell"/>
</dbReference>
<dbReference type="GO" id="GO:0016020">
    <property type="term" value="C:membrane"/>
    <property type="evidence" value="ECO:0007669"/>
    <property type="project" value="UniProtKB-KW"/>
</dbReference>
<dbReference type="InterPro" id="IPR007166">
    <property type="entry name" value="Class3_signal_pept_motif"/>
</dbReference>
<dbReference type="Pfam" id="PF04021">
    <property type="entry name" value="Class_IIIsignal"/>
    <property type="match status" value="1"/>
</dbReference>
<reference key="1">
    <citation type="journal article" date="2004" name="J. Bacteriol.">
        <title>Complete genome sequence of the genetically tractable hydrogenotrophic methanogen Methanococcus maripaludis.</title>
        <authorList>
            <person name="Hendrickson E.L."/>
            <person name="Kaul R."/>
            <person name="Zhou Y."/>
            <person name="Bovee D."/>
            <person name="Chapman P."/>
            <person name="Chung J."/>
            <person name="Conway de Macario E."/>
            <person name="Dodsworth J.A."/>
            <person name="Gillett W."/>
            <person name="Graham D.E."/>
            <person name="Hackett M."/>
            <person name="Haydock A.K."/>
            <person name="Kang A."/>
            <person name="Land M.L."/>
            <person name="Levy R."/>
            <person name="Lie T.J."/>
            <person name="Major T.A."/>
            <person name="Moore B.C."/>
            <person name="Porat I."/>
            <person name="Palmeiri A."/>
            <person name="Rouse G."/>
            <person name="Saenphimmachak C."/>
            <person name="Soell D."/>
            <person name="Van Dien S."/>
            <person name="Wang T."/>
            <person name="Whitman W.B."/>
            <person name="Xia Q."/>
            <person name="Zhang Y."/>
            <person name="Larimer F.W."/>
            <person name="Olson M.V."/>
            <person name="Leigh J.A."/>
        </authorList>
    </citation>
    <scope>NUCLEOTIDE SEQUENCE [LARGE SCALE GENOMIC DNA]</scope>
    <source>
        <strain>DSM 14266 / JCM 13030 / NBRC 101832 / S2 / LL</strain>
    </source>
</reference>
<reference key="2">
    <citation type="journal article" date="2013" name="PLoS ONE">
        <title>Identification of an additional minor pilin essential for piliation in the archaeon Methanococcus maripaludis.</title>
        <authorList>
            <person name="Nair D.B."/>
            <person name="Chung D.K."/>
            <person name="Schneider J."/>
            <person name="Uchida K."/>
            <person name="Aizawa S."/>
            <person name="Jarrell K.F."/>
        </authorList>
    </citation>
    <scope>FUNCTION</scope>
    <scope>EXPRESSION</scope>
    <scope>DISRUPTION PHENOTYPE</scope>
    <source>
        <strain>DSM 14266 / JCM 13030 / NBRC 101832 / S2 / LL</strain>
    </source>
</reference>
<reference key="3">
    <citation type="journal article" date="2015" name="Life">
        <title>Pilin Processing Follows a Different Temporal Route than That of Archaellins in Methanococcus maripaludis.</title>
        <authorList>
            <person name="Nair D.B."/>
            <person name="Jarrell K.F."/>
        </authorList>
    </citation>
    <scope>CLEAVAGE OF N-TERMINUS</scope>
    <scope>GLYCOSYLATION</scope>
    <source>
        <strain>DSM 14266 / JCM 13030 / NBRC 101832 / S2 / LL</strain>
    </source>
</reference>
<keyword id="KW-0281">Fimbrium</keyword>
<keyword id="KW-0325">Glycoprotein</keyword>
<keyword id="KW-1185">Reference proteome</keyword>
<keyword id="KW-0964">Secreted</keyword>
<accession>Q6LXR6</accession>
<sequence>MSVALKKFFSKRGQLSLEFSVLVLAVITAAILLGYHLIVSSKAVQESNIDTINNTHNTAIDALSEVS</sequence>